<reference key="1">
    <citation type="journal article" date="1999" name="Nat. Genet.">
        <title>Comparative genomes of Chlamydia pneumoniae and C. trachomatis.</title>
        <authorList>
            <person name="Kalman S."/>
            <person name="Mitchell W.P."/>
            <person name="Marathe R."/>
            <person name="Lammel C.J."/>
            <person name="Fan J."/>
            <person name="Hyman R.W."/>
            <person name="Olinger L."/>
            <person name="Grimwood J."/>
            <person name="Davis R.W."/>
            <person name="Stephens R.S."/>
        </authorList>
    </citation>
    <scope>NUCLEOTIDE SEQUENCE [LARGE SCALE GENOMIC DNA]</scope>
    <source>
        <strain>CWL029</strain>
    </source>
</reference>
<reference key="2">
    <citation type="journal article" date="2000" name="Nucleic Acids Res.">
        <title>Genome sequences of Chlamydia trachomatis MoPn and Chlamydia pneumoniae AR39.</title>
        <authorList>
            <person name="Read T.D."/>
            <person name="Brunham R.C."/>
            <person name="Shen C."/>
            <person name="Gill S.R."/>
            <person name="Heidelberg J.F."/>
            <person name="White O."/>
            <person name="Hickey E.K."/>
            <person name="Peterson J.D."/>
            <person name="Utterback T.R."/>
            <person name="Berry K.J."/>
            <person name="Bass S."/>
            <person name="Linher K.D."/>
            <person name="Weidman J.F."/>
            <person name="Khouri H.M."/>
            <person name="Craven B."/>
            <person name="Bowman C."/>
            <person name="Dodson R.J."/>
            <person name="Gwinn M.L."/>
            <person name="Nelson W.C."/>
            <person name="DeBoy R.T."/>
            <person name="Kolonay J.F."/>
            <person name="McClarty G."/>
            <person name="Salzberg S.L."/>
            <person name="Eisen J.A."/>
            <person name="Fraser C.M."/>
        </authorList>
    </citation>
    <scope>NUCLEOTIDE SEQUENCE [LARGE SCALE GENOMIC DNA]</scope>
    <source>
        <strain>AR39</strain>
    </source>
</reference>
<reference key="3">
    <citation type="journal article" date="2000" name="Nucleic Acids Res.">
        <title>Comparison of whole genome sequences of Chlamydia pneumoniae J138 from Japan and CWL029 from USA.</title>
        <authorList>
            <person name="Shirai M."/>
            <person name="Hirakawa H."/>
            <person name="Kimoto M."/>
            <person name="Tabuchi M."/>
            <person name="Kishi F."/>
            <person name="Ouchi K."/>
            <person name="Shiba T."/>
            <person name="Ishii K."/>
            <person name="Hattori M."/>
            <person name="Kuhara S."/>
            <person name="Nakazawa T."/>
        </authorList>
    </citation>
    <scope>NUCLEOTIDE SEQUENCE [LARGE SCALE GENOMIC DNA]</scope>
    <source>
        <strain>J138</strain>
    </source>
</reference>
<reference key="4">
    <citation type="submission" date="2002-05" db="EMBL/GenBank/DDBJ databases">
        <title>The genome sequence of Chlamydia pneumoniae TW183 and comparison with other Chlamydia strains based on whole genome sequence analysis.</title>
        <authorList>
            <person name="Geng M.M."/>
            <person name="Schuhmacher A."/>
            <person name="Muehldorfer I."/>
            <person name="Bensch K.W."/>
            <person name="Schaefer K.P."/>
            <person name="Schneider S."/>
            <person name="Pohl T."/>
            <person name="Essig A."/>
            <person name="Marre R."/>
            <person name="Melchers K."/>
        </authorList>
    </citation>
    <scope>NUCLEOTIDE SEQUENCE [LARGE SCALE GENOMIC DNA]</scope>
    <source>
        <strain>TW-183</strain>
    </source>
</reference>
<protein>
    <recommendedName>
        <fullName evidence="1">Ribonuclease P protein component</fullName>
        <shortName evidence="1">RNase P protein</shortName>
        <shortName evidence="1">RNaseP protein</shortName>
        <ecNumber evidence="1">3.1.26.5</ecNumber>
    </recommendedName>
    <alternativeName>
        <fullName evidence="1">Protein C5</fullName>
    </alternativeName>
</protein>
<name>RNPA_CHLPN</name>
<keyword id="KW-0255">Endonuclease</keyword>
<keyword id="KW-0378">Hydrolase</keyword>
<keyword id="KW-0540">Nuclease</keyword>
<keyword id="KW-0694">RNA-binding</keyword>
<keyword id="KW-0819">tRNA processing</keyword>
<feature type="chain" id="PRO_0000198446" description="Ribonuclease P protein component">
    <location>
        <begin position="1"/>
        <end position="139"/>
    </location>
</feature>
<feature type="region of interest" description="Disordered" evidence="2">
    <location>
        <begin position="120"/>
        <end position="139"/>
    </location>
</feature>
<organism>
    <name type="scientific">Chlamydia pneumoniae</name>
    <name type="common">Chlamydophila pneumoniae</name>
    <dbReference type="NCBI Taxonomy" id="83558"/>
    <lineage>
        <taxon>Bacteria</taxon>
        <taxon>Pseudomonadati</taxon>
        <taxon>Chlamydiota</taxon>
        <taxon>Chlamydiia</taxon>
        <taxon>Chlamydiales</taxon>
        <taxon>Chlamydiaceae</taxon>
        <taxon>Chlamydia/Chlamydophila group</taxon>
        <taxon>Chlamydia</taxon>
    </lineage>
</organism>
<comment type="function">
    <text evidence="1">RNaseP catalyzes the removal of the 5'-leader sequence from pre-tRNA to produce the mature 5'-terminus. It can also cleave other RNA substrates such as 4.5S RNA. The protein component plays an auxiliary but essential role in vivo by binding to the 5'-leader sequence and broadening the substrate specificity of the ribozyme.</text>
</comment>
<comment type="catalytic activity">
    <reaction evidence="1">
        <text>Endonucleolytic cleavage of RNA, removing 5'-extranucleotides from tRNA precursor.</text>
        <dbReference type="EC" id="3.1.26.5"/>
    </reaction>
</comment>
<comment type="subunit">
    <text evidence="1">Consists of a catalytic RNA component (M1 or rnpB) and a protein subunit.</text>
</comment>
<comment type="similarity">
    <text evidence="1">Belongs to the RnpA family.</text>
</comment>
<sequence length="139" mass="15927">MHPLTLPKQSRVLKRKQFLYITRSGFCCRGSQATFYVVPSRHPGTCRMGITVSKKFGKAHERNSFKRVVREVFRHVRHQLPNCQIVVFPKGHKQRPVFSKLLQDFINQIPEGLHRLGKTKATTGGECTPKSEKCVTAPR</sequence>
<gene>
    <name evidence="1" type="primary">rnpA</name>
    <name type="ordered locus">CPn_0934</name>
    <name type="ordered locus">CP_0927</name>
    <name type="ordered locus">CpB0967</name>
</gene>
<proteinExistence type="inferred from homology"/>
<evidence type="ECO:0000255" key="1">
    <source>
        <dbReference type="HAMAP-Rule" id="MF_00227"/>
    </source>
</evidence>
<evidence type="ECO:0000256" key="2">
    <source>
        <dbReference type="SAM" id="MobiDB-lite"/>
    </source>
</evidence>
<accession>Q9Z6X2</accession>
<accession>Q9JQ16</accession>
<dbReference type="EC" id="3.1.26.5" evidence="1"/>
<dbReference type="EMBL" id="AE001363">
    <property type="protein sequence ID" value="AAD19072.1"/>
    <property type="molecule type" value="Genomic_DNA"/>
</dbReference>
<dbReference type="EMBL" id="AE002161">
    <property type="protein sequence ID" value="AAF73717.1"/>
    <property type="molecule type" value="Genomic_DNA"/>
</dbReference>
<dbReference type="EMBL" id="BA000008">
    <property type="protein sequence ID" value="BAA99142.1"/>
    <property type="molecule type" value="Genomic_DNA"/>
</dbReference>
<dbReference type="EMBL" id="AE009440">
    <property type="protein sequence ID" value="AAP98897.1"/>
    <property type="molecule type" value="Genomic_DNA"/>
</dbReference>
<dbReference type="PIR" id="D86607">
    <property type="entry name" value="D86607"/>
</dbReference>
<dbReference type="PIR" id="H72016">
    <property type="entry name" value="H72016"/>
</dbReference>
<dbReference type="RefSeq" id="NP_225129.1">
    <property type="nucleotide sequence ID" value="NC_000922.1"/>
</dbReference>
<dbReference type="RefSeq" id="WP_010883569.1">
    <property type="nucleotide sequence ID" value="NZ_LN847257.1"/>
</dbReference>
<dbReference type="SMR" id="Q9Z6X2"/>
<dbReference type="GeneID" id="45050990"/>
<dbReference type="KEGG" id="cpa:CP_0927"/>
<dbReference type="KEGG" id="cpj:rnpA"/>
<dbReference type="KEGG" id="cpn:CPn_0934"/>
<dbReference type="KEGG" id="cpt:CpB0967"/>
<dbReference type="PATRIC" id="fig|115713.3.peg.1022"/>
<dbReference type="eggNOG" id="COG0594">
    <property type="taxonomic scope" value="Bacteria"/>
</dbReference>
<dbReference type="HOGENOM" id="CLU_117179_9_2_0"/>
<dbReference type="OrthoDB" id="9810867at2"/>
<dbReference type="Proteomes" id="UP000000583">
    <property type="component" value="Chromosome"/>
</dbReference>
<dbReference type="Proteomes" id="UP000000801">
    <property type="component" value="Chromosome"/>
</dbReference>
<dbReference type="GO" id="GO:0030677">
    <property type="term" value="C:ribonuclease P complex"/>
    <property type="evidence" value="ECO:0007669"/>
    <property type="project" value="TreeGrafter"/>
</dbReference>
<dbReference type="GO" id="GO:0042781">
    <property type="term" value="F:3'-tRNA processing endoribonuclease activity"/>
    <property type="evidence" value="ECO:0007669"/>
    <property type="project" value="TreeGrafter"/>
</dbReference>
<dbReference type="GO" id="GO:0004526">
    <property type="term" value="F:ribonuclease P activity"/>
    <property type="evidence" value="ECO:0007669"/>
    <property type="project" value="UniProtKB-UniRule"/>
</dbReference>
<dbReference type="GO" id="GO:0000049">
    <property type="term" value="F:tRNA binding"/>
    <property type="evidence" value="ECO:0007669"/>
    <property type="project" value="UniProtKB-UniRule"/>
</dbReference>
<dbReference type="GO" id="GO:0001682">
    <property type="term" value="P:tRNA 5'-leader removal"/>
    <property type="evidence" value="ECO:0007669"/>
    <property type="project" value="UniProtKB-UniRule"/>
</dbReference>
<dbReference type="Gene3D" id="3.30.230.10">
    <property type="match status" value="1"/>
</dbReference>
<dbReference type="HAMAP" id="MF_00227">
    <property type="entry name" value="RNase_P"/>
    <property type="match status" value="1"/>
</dbReference>
<dbReference type="InterPro" id="IPR020568">
    <property type="entry name" value="Ribosomal_Su5_D2-typ_SF"/>
</dbReference>
<dbReference type="InterPro" id="IPR014721">
    <property type="entry name" value="Ribsml_uS5_D2-typ_fold_subgr"/>
</dbReference>
<dbReference type="InterPro" id="IPR000100">
    <property type="entry name" value="RNase_P"/>
</dbReference>
<dbReference type="NCBIfam" id="TIGR00188">
    <property type="entry name" value="rnpA"/>
    <property type="match status" value="1"/>
</dbReference>
<dbReference type="PANTHER" id="PTHR33992">
    <property type="entry name" value="RIBONUCLEASE P PROTEIN COMPONENT"/>
    <property type="match status" value="1"/>
</dbReference>
<dbReference type="PANTHER" id="PTHR33992:SF1">
    <property type="entry name" value="RIBONUCLEASE P PROTEIN COMPONENT"/>
    <property type="match status" value="1"/>
</dbReference>
<dbReference type="Pfam" id="PF00825">
    <property type="entry name" value="Ribonuclease_P"/>
    <property type="match status" value="1"/>
</dbReference>
<dbReference type="SUPFAM" id="SSF54211">
    <property type="entry name" value="Ribosomal protein S5 domain 2-like"/>
    <property type="match status" value="1"/>
</dbReference>